<dbReference type="EMBL" id="CP000552">
    <property type="protein sequence ID" value="ABM72038.1"/>
    <property type="molecule type" value="Genomic_DNA"/>
</dbReference>
<dbReference type="RefSeq" id="WP_011820143.1">
    <property type="nucleotide sequence ID" value="NC_008817.1"/>
</dbReference>
<dbReference type="SMR" id="A2BW77"/>
<dbReference type="STRING" id="167542.P9515_08311"/>
<dbReference type="GeneID" id="60201561"/>
<dbReference type="KEGG" id="pmc:P9515_08311"/>
<dbReference type="eggNOG" id="COG0052">
    <property type="taxonomic scope" value="Bacteria"/>
</dbReference>
<dbReference type="HOGENOM" id="CLU_040318_1_2_3"/>
<dbReference type="OrthoDB" id="9808036at2"/>
<dbReference type="Proteomes" id="UP000001589">
    <property type="component" value="Chromosome"/>
</dbReference>
<dbReference type="GO" id="GO:0022627">
    <property type="term" value="C:cytosolic small ribosomal subunit"/>
    <property type="evidence" value="ECO:0007669"/>
    <property type="project" value="TreeGrafter"/>
</dbReference>
<dbReference type="GO" id="GO:0003735">
    <property type="term" value="F:structural constituent of ribosome"/>
    <property type="evidence" value="ECO:0007669"/>
    <property type="project" value="InterPro"/>
</dbReference>
<dbReference type="GO" id="GO:0006412">
    <property type="term" value="P:translation"/>
    <property type="evidence" value="ECO:0007669"/>
    <property type="project" value="UniProtKB-UniRule"/>
</dbReference>
<dbReference type="CDD" id="cd01425">
    <property type="entry name" value="RPS2"/>
    <property type="match status" value="1"/>
</dbReference>
<dbReference type="FunFam" id="1.10.287.610:FF:000001">
    <property type="entry name" value="30S ribosomal protein S2"/>
    <property type="match status" value="1"/>
</dbReference>
<dbReference type="Gene3D" id="3.40.50.10490">
    <property type="entry name" value="Glucose-6-phosphate isomerase like protein, domain 1"/>
    <property type="match status" value="1"/>
</dbReference>
<dbReference type="Gene3D" id="1.10.287.610">
    <property type="entry name" value="Helix hairpin bin"/>
    <property type="match status" value="1"/>
</dbReference>
<dbReference type="HAMAP" id="MF_00291_B">
    <property type="entry name" value="Ribosomal_uS2_B"/>
    <property type="match status" value="1"/>
</dbReference>
<dbReference type="InterPro" id="IPR001865">
    <property type="entry name" value="Ribosomal_uS2"/>
</dbReference>
<dbReference type="InterPro" id="IPR005706">
    <property type="entry name" value="Ribosomal_uS2_bac/mit/plastid"/>
</dbReference>
<dbReference type="InterPro" id="IPR018130">
    <property type="entry name" value="Ribosomal_uS2_CS"/>
</dbReference>
<dbReference type="InterPro" id="IPR023591">
    <property type="entry name" value="Ribosomal_uS2_flav_dom_sf"/>
</dbReference>
<dbReference type="NCBIfam" id="TIGR01011">
    <property type="entry name" value="rpsB_bact"/>
    <property type="match status" value="1"/>
</dbReference>
<dbReference type="PANTHER" id="PTHR12534">
    <property type="entry name" value="30S RIBOSOMAL PROTEIN S2 PROKARYOTIC AND ORGANELLAR"/>
    <property type="match status" value="1"/>
</dbReference>
<dbReference type="PANTHER" id="PTHR12534:SF0">
    <property type="entry name" value="SMALL RIBOSOMAL SUBUNIT PROTEIN US2M"/>
    <property type="match status" value="1"/>
</dbReference>
<dbReference type="Pfam" id="PF00318">
    <property type="entry name" value="Ribosomal_S2"/>
    <property type="match status" value="1"/>
</dbReference>
<dbReference type="PRINTS" id="PR00395">
    <property type="entry name" value="RIBOSOMALS2"/>
</dbReference>
<dbReference type="SUPFAM" id="SSF52313">
    <property type="entry name" value="Ribosomal protein S2"/>
    <property type="match status" value="1"/>
</dbReference>
<dbReference type="PROSITE" id="PS00962">
    <property type="entry name" value="RIBOSOMAL_S2_1"/>
    <property type="match status" value="1"/>
</dbReference>
<proteinExistence type="inferred from homology"/>
<comment type="similarity">
    <text evidence="1">Belongs to the universal ribosomal protein uS2 family.</text>
</comment>
<accession>A2BW77</accession>
<name>RS2_PROM5</name>
<evidence type="ECO:0000255" key="1">
    <source>
        <dbReference type="HAMAP-Rule" id="MF_00291"/>
    </source>
</evidence>
<evidence type="ECO:0000305" key="2"/>
<keyword id="KW-0687">Ribonucleoprotein</keyword>
<keyword id="KW-0689">Ribosomal protein</keyword>
<organism>
    <name type="scientific">Prochlorococcus marinus (strain MIT 9515)</name>
    <dbReference type="NCBI Taxonomy" id="167542"/>
    <lineage>
        <taxon>Bacteria</taxon>
        <taxon>Bacillati</taxon>
        <taxon>Cyanobacteriota</taxon>
        <taxon>Cyanophyceae</taxon>
        <taxon>Synechococcales</taxon>
        <taxon>Prochlorococcaceae</taxon>
        <taxon>Prochlorococcus</taxon>
    </lineage>
</organism>
<sequence length="234" mass="26351">MAVVSLSEMMEAGAHFGHQTRRWNPKMSKYIYCARNGVHIIDLVKTALCMNNAYKWTRNAAKSGKRFLFVGTKKQASDVVAQEAVRCGAAYVNQRWLGGMLTNWSTMKARIERLKDLERMESSGAIAMRPKKEAAVLRRELERLQKYLGGLKGMRRLPDVVVLVDQRRESNAVLEARKLDISLVSMLDTNCDPDLCEVPIPCNDDAVRSVQLILGRLADAINEGRKGSNDQRKV</sequence>
<protein>
    <recommendedName>
        <fullName evidence="1">Small ribosomal subunit protein uS2</fullName>
    </recommendedName>
    <alternativeName>
        <fullName evidence="2">30S ribosomal protein S2</fullName>
    </alternativeName>
</protein>
<reference key="1">
    <citation type="journal article" date="2007" name="PLoS Genet.">
        <title>Patterns and implications of gene gain and loss in the evolution of Prochlorococcus.</title>
        <authorList>
            <person name="Kettler G.C."/>
            <person name="Martiny A.C."/>
            <person name="Huang K."/>
            <person name="Zucker J."/>
            <person name="Coleman M.L."/>
            <person name="Rodrigue S."/>
            <person name="Chen F."/>
            <person name="Lapidus A."/>
            <person name="Ferriera S."/>
            <person name="Johnson J."/>
            <person name="Steglich C."/>
            <person name="Church G.M."/>
            <person name="Richardson P."/>
            <person name="Chisholm S.W."/>
        </authorList>
    </citation>
    <scope>NUCLEOTIDE SEQUENCE [LARGE SCALE GENOMIC DNA]</scope>
    <source>
        <strain>MIT 9515</strain>
    </source>
</reference>
<gene>
    <name evidence="1" type="primary">rpsB</name>
    <name evidence="1" type="synonym">rps2</name>
    <name type="ordered locus">P9515_08311</name>
</gene>
<feature type="chain" id="PRO_1000004024" description="Small ribosomal subunit protein uS2">
    <location>
        <begin position="1"/>
        <end position="234"/>
    </location>
</feature>